<gene>
    <name evidence="1" type="primary">dbe</name>
    <name evidence="1" type="synonym">dribble</name>
    <name type="ORF">GK24616</name>
</gene>
<name>KRR1_DROWI</name>
<feature type="chain" id="PRO_0000415657" description="KRR1 small subunit processome component homolog">
    <location>
        <begin position="1"/>
        <end position="347"/>
    </location>
</feature>
<feature type="domain" description="KH" evidence="2">
    <location>
        <begin position="124"/>
        <end position="194"/>
    </location>
</feature>
<feature type="region of interest" description="Disordered" evidence="3">
    <location>
        <begin position="231"/>
        <end position="347"/>
    </location>
</feature>
<feature type="coiled-coil region" evidence="2">
    <location>
        <begin position="271"/>
        <end position="304"/>
    </location>
</feature>
<feature type="compositionally biased region" description="Basic residues" evidence="3">
    <location>
        <begin position="231"/>
        <end position="246"/>
    </location>
</feature>
<feature type="compositionally biased region" description="Basic and acidic residues" evidence="3">
    <location>
        <begin position="272"/>
        <end position="303"/>
    </location>
</feature>
<feature type="compositionally biased region" description="Basic and acidic residues" evidence="3">
    <location>
        <begin position="318"/>
        <end position="329"/>
    </location>
</feature>
<feature type="compositionally biased region" description="Basic residues" evidence="3">
    <location>
        <begin position="337"/>
        <end position="347"/>
    </location>
</feature>
<comment type="function">
    <text evidence="1">Required for 40S ribosome biogenesis. Involved in nucleolar processing of pre-18S ribosomal RNA and ribosome assembly. Binds to RNA. Required for female germline development, cell viability during eye development and for survival of dividing cells and epithelial cells during early wing disk development (By similarity).</text>
</comment>
<comment type="subunit">
    <text evidence="1">Monomer. Component of the ribosomal small subunit (SSU) processome (By similarity).</text>
</comment>
<comment type="subcellular location">
    <subcellularLocation>
        <location evidence="1">Nucleus</location>
        <location evidence="1">Nucleolus</location>
    </subcellularLocation>
</comment>
<comment type="similarity">
    <text evidence="2">Belongs to the KRR1 family.</text>
</comment>
<accession>B4N0P7</accession>
<evidence type="ECO:0000250" key="1">
    <source>
        <dbReference type="UniProtKB" id="Q9VPU8"/>
    </source>
</evidence>
<evidence type="ECO:0000255" key="2"/>
<evidence type="ECO:0000256" key="3">
    <source>
        <dbReference type="SAM" id="MobiDB-lite"/>
    </source>
</evidence>
<evidence type="ECO:0000312" key="4">
    <source>
        <dbReference type="EMBL" id="EDW77660.1"/>
    </source>
</evidence>
<reference evidence="4" key="1">
    <citation type="journal article" date="2007" name="Nature">
        <title>Evolution of genes and genomes on the Drosophila phylogeny.</title>
        <authorList>
            <consortium name="Drosophila 12 genomes consortium"/>
        </authorList>
    </citation>
    <scope>NUCLEOTIDE SEQUENCE [LARGE SCALE GENOMIC DNA]</scope>
    <source>
        <strain evidence="4">Tucson 14030-0811.24</strain>
    </source>
</reference>
<dbReference type="EMBL" id="CH963920">
    <property type="protein sequence ID" value="EDW77660.1"/>
    <property type="molecule type" value="Genomic_DNA"/>
</dbReference>
<dbReference type="SMR" id="B4N0P7"/>
<dbReference type="STRING" id="7260.B4N0P7"/>
<dbReference type="EnsemblMetazoa" id="FBtr0255267">
    <property type="protein sequence ID" value="FBpp0253759"/>
    <property type="gene ID" value="FBgn0226576"/>
</dbReference>
<dbReference type="EnsemblMetazoa" id="XM_002066638.4">
    <property type="protein sequence ID" value="XP_002066674.1"/>
    <property type="gene ID" value="LOC6644377"/>
</dbReference>
<dbReference type="GeneID" id="6644377"/>
<dbReference type="KEGG" id="dwi:6644377"/>
<dbReference type="CTD" id="33269"/>
<dbReference type="eggNOG" id="KOG2874">
    <property type="taxonomic scope" value="Eukaryota"/>
</dbReference>
<dbReference type="HOGENOM" id="CLU_040185_0_2_1"/>
<dbReference type="OMA" id="TPDIDKW"/>
<dbReference type="OrthoDB" id="441223at2759"/>
<dbReference type="PhylomeDB" id="B4N0P7"/>
<dbReference type="Proteomes" id="UP000007798">
    <property type="component" value="Unassembled WGS sequence"/>
</dbReference>
<dbReference type="GO" id="GO:0005730">
    <property type="term" value="C:nucleolus"/>
    <property type="evidence" value="ECO:0007669"/>
    <property type="project" value="UniProtKB-SubCell"/>
</dbReference>
<dbReference type="GO" id="GO:0005654">
    <property type="term" value="C:nucleoplasm"/>
    <property type="evidence" value="ECO:0007669"/>
    <property type="project" value="EnsemblMetazoa"/>
</dbReference>
<dbReference type="GO" id="GO:0032040">
    <property type="term" value="C:small-subunit processome"/>
    <property type="evidence" value="ECO:0007669"/>
    <property type="project" value="TreeGrafter"/>
</dbReference>
<dbReference type="GO" id="GO:0003723">
    <property type="term" value="F:RNA binding"/>
    <property type="evidence" value="ECO:0007669"/>
    <property type="project" value="UniProtKB-KW"/>
</dbReference>
<dbReference type="GO" id="GO:0006364">
    <property type="term" value="P:rRNA processing"/>
    <property type="evidence" value="ECO:0007669"/>
    <property type="project" value="UniProtKB-KW"/>
</dbReference>
<dbReference type="CDD" id="cd22393">
    <property type="entry name" value="KH-I_KRR1_rpt1"/>
    <property type="match status" value="1"/>
</dbReference>
<dbReference type="CDD" id="cd22394">
    <property type="entry name" value="KH-I_KRR1_rpt2"/>
    <property type="match status" value="1"/>
</dbReference>
<dbReference type="FunFam" id="3.30.1370.10:FF:000011">
    <property type="entry name" value="KRR1 small subunit processome component"/>
    <property type="match status" value="1"/>
</dbReference>
<dbReference type="FunFam" id="3.30.1370.10:FF:000014">
    <property type="entry name" value="KRR1 small subunit processome component"/>
    <property type="match status" value="1"/>
</dbReference>
<dbReference type="Gene3D" id="3.30.1370.10">
    <property type="entry name" value="K Homology domain, type 1"/>
    <property type="match status" value="2"/>
</dbReference>
<dbReference type="InterPro" id="IPR004087">
    <property type="entry name" value="KH_dom"/>
</dbReference>
<dbReference type="InterPro" id="IPR036612">
    <property type="entry name" value="KH_dom_type_1_sf"/>
</dbReference>
<dbReference type="InterPro" id="IPR041174">
    <property type="entry name" value="KRR1-like_KH1"/>
</dbReference>
<dbReference type="InterPro" id="IPR048550">
    <property type="entry name" value="KRR1-like_KH1_euk"/>
</dbReference>
<dbReference type="InterPro" id="IPR048548">
    <property type="entry name" value="KRR1-like_KH2"/>
</dbReference>
<dbReference type="InterPro" id="IPR048549">
    <property type="entry name" value="KRR1-like_KH2_euk"/>
</dbReference>
<dbReference type="InterPro" id="IPR024166">
    <property type="entry name" value="rRNA_assembly_KRR1"/>
</dbReference>
<dbReference type="PANTHER" id="PTHR12581">
    <property type="entry name" value="HIV-1 REV BINDING PROTEIN 2, 3"/>
    <property type="match status" value="1"/>
</dbReference>
<dbReference type="PANTHER" id="PTHR12581:SF0">
    <property type="entry name" value="KRR1 SMALL SUBUNIT PROCESSOME COMPONENT HOMOLOG"/>
    <property type="match status" value="1"/>
</dbReference>
<dbReference type="Pfam" id="PF17903">
    <property type="entry name" value="KH_KRR1_1st"/>
    <property type="match status" value="1"/>
</dbReference>
<dbReference type="Pfam" id="PF21800">
    <property type="entry name" value="KH_KRR1_2nd"/>
    <property type="match status" value="1"/>
</dbReference>
<dbReference type="PIRSF" id="PIRSF006515">
    <property type="entry name" value="KRR1"/>
    <property type="match status" value="1"/>
</dbReference>
<dbReference type="SMART" id="SM00322">
    <property type="entry name" value="KH"/>
    <property type="match status" value="1"/>
</dbReference>
<dbReference type="SUPFAM" id="SSF54791">
    <property type="entry name" value="Eukaryotic type KH-domain (KH-domain type I)"/>
    <property type="match status" value="1"/>
</dbReference>
<proteinExistence type="inferred from homology"/>
<sequence length="347" mass="39887">MSDSESEEATKINTDPVDNAWSLKIPAFKETDNPHGMIEESSFATLFPKYREKYLKEVWPLVEQAVGEHHLKAELDLVEGSMVVKTTRKTWDPYIIIKARDMIKLMARSVPFEQAKRVLQDEIGCDIIKIGNLVQKKEKFVKRRQRLIGPNGATLKSIELLTDCYVLVQGNTVSALGPYKGLQQVRDIVLETMNNVHPIYNIKALMIKRELMKDPKLANEDWSRFLPKFKNKNLSKRKQPKVKKPKKEYTPFPPAQPESKIDKQLASGEYFLNKEQKQAKRQQERQTKQAEAAKKQDERRNKDFIPPTEEPPTGSKRKANDNDSSDSRVDVQSLKAKLLKANKKSKS</sequence>
<keyword id="KW-0175">Coiled coil</keyword>
<keyword id="KW-0217">Developmental protein</keyword>
<keyword id="KW-0539">Nucleus</keyword>
<keyword id="KW-1185">Reference proteome</keyword>
<keyword id="KW-0687">Ribonucleoprotein</keyword>
<keyword id="KW-0690">Ribosome biogenesis</keyword>
<keyword id="KW-0694">RNA-binding</keyword>
<keyword id="KW-0698">rRNA processing</keyword>
<organism>
    <name type="scientific">Drosophila willistoni</name>
    <name type="common">Fruit fly</name>
    <dbReference type="NCBI Taxonomy" id="7260"/>
    <lineage>
        <taxon>Eukaryota</taxon>
        <taxon>Metazoa</taxon>
        <taxon>Ecdysozoa</taxon>
        <taxon>Arthropoda</taxon>
        <taxon>Hexapoda</taxon>
        <taxon>Insecta</taxon>
        <taxon>Pterygota</taxon>
        <taxon>Neoptera</taxon>
        <taxon>Endopterygota</taxon>
        <taxon>Diptera</taxon>
        <taxon>Brachycera</taxon>
        <taxon>Muscomorpha</taxon>
        <taxon>Ephydroidea</taxon>
        <taxon>Drosophilidae</taxon>
        <taxon>Drosophila</taxon>
        <taxon>Sophophora</taxon>
    </lineage>
</organism>
<protein>
    <recommendedName>
        <fullName evidence="1">KRR1 small subunit processome component homolog</fullName>
    </recommendedName>
    <alternativeName>
        <fullName evidence="1">KRR-R motif-containing protein 1</fullName>
    </alternativeName>
    <alternativeName>
        <fullName evidence="1">Protein dribble</fullName>
    </alternativeName>
</protein>